<sequence length="215" mass="22915">MKKPYRKISDYAIVGGLSALVMVSIVGCKSNADDKPKEQSSLSQSVQKGAFVILEEQKDKSYKVVEEYPSSRTHIVVRDLQGNERVLSNEEIQKLIKEEEAKIDNGTSKLVQPNNGGSNEGSGFGLGSAILGSAAGAILGSYIGNKLFNNPNYQQNAQRTYKSPQAYQRSQNSFSKSAPSASSMGTASKGQSGFFGSSRPTSSPAISSGTRGFNA</sequence>
<evidence type="ECO:0000255" key="1">
    <source>
        <dbReference type="HAMAP-Rule" id="MF_01421"/>
    </source>
</evidence>
<evidence type="ECO:0000256" key="2">
    <source>
        <dbReference type="SAM" id="MobiDB-lite"/>
    </source>
</evidence>
<proteinExistence type="inferred from homology"/>
<dbReference type="EMBL" id="AE001439">
    <property type="protein sequence ID" value="AAD05804.1"/>
    <property type="molecule type" value="Genomic_DNA"/>
</dbReference>
<dbReference type="PIR" id="D71958">
    <property type="entry name" value="D71958"/>
</dbReference>
<dbReference type="RefSeq" id="WP_000743539.1">
    <property type="nucleotide sequence ID" value="NC_000921.1"/>
</dbReference>
<dbReference type="SMR" id="Q9ZMK2"/>
<dbReference type="KEGG" id="hpj:jhp_0217"/>
<dbReference type="PATRIC" id="fig|85963.30.peg.798"/>
<dbReference type="eggNOG" id="ENOG502ZIB8">
    <property type="taxonomic scope" value="Bacteria"/>
</dbReference>
<dbReference type="Proteomes" id="UP000000804">
    <property type="component" value="Chromosome"/>
</dbReference>
<dbReference type="GO" id="GO:0005886">
    <property type="term" value="C:plasma membrane"/>
    <property type="evidence" value="ECO:0007669"/>
    <property type="project" value="UniProtKB-SubCell"/>
</dbReference>
<dbReference type="HAMAP" id="MF_01421">
    <property type="entry name" value="UPF0323"/>
    <property type="match status" value="1"/>
</dbReference>
<dbReference type="InterPro" id="IPR020913">
    <property type="entry name" value="UPF0323"/>
</dbReference>
<dbReference type="NCBIfam" id="NF003146">
    <property type="entry name" value="PRK04081.1"/>
    <property type="match status" value="1"/>
</dbReference>
<dbReference type="PROSITE" id="PS51257">
    <property type="entry name" value="PROKAR_LIPOPROTEIN"/>
    <property type="match status" value="1"/>
</dbReference>
<protein>
    <recommendedName>
        <fullName evidence="1">UPF0323 lipoprotein jhp_0217</fullName>
    </recommendedName>
</protein>
<name>Y217_HELPJ</name>
<keyword id="KW-1003">Cell membrane</keyword>
<keyword id="KW-0449">Lipoprotein</keyword>
<keyword id="KW-0472">Membrane</keyword>
<keyword id="KW-0564">Palmitate</keyword>
<keyword id="KW-0732">Signal</keyword>
<comment type="subcellular location">
    <subcellularLocation>
        <location evidence="1">Cell membrane</location>
        <topology evidence="1">Lipid-anchor</topology>
    </subcellularLocation>
</comment>
<comment type="similarity">
    <text evidence="1">Belongs to the UPF0323 family.</text>
</comment>
<feature type="signal peptide" evidence="1">
    <location>
        <begin position="1"/>
        <end position="27"/>
    </location>
</feature>
<feature type="chain" id="PRO_0000036326" description="UPF0323 lipoprotein jhp_0217">
    <location>
        <begin position="28"/>
        <end position="215"/>
    </location>
</feature>
<feature type="region of interest" description="Disordered" evidence="2">
    <location>
        <begin position="158"/>
        <end position="215"/>
    </location>
</feature>
<feature type="compositionally biased region" description="Polar residues" evidence="2">
    <location>
        <begin position="158"/>
        <end position="169"/>
    </location>
</feature>
<feature type="compositionally biased region" description="Low complexity" evidence="2">
    <location>
        <begin position="170"/>
        <end position="183"/>
    </location>
</feature>
<feature type="compositionally biased region" description="Polar residues" evidence="2">
    <location>
        <begin position="184"/>
        <end position="195"/>
    </location>
</feature>
<feature type="compositionally biased region" description="Low complexity" evidence="2">
    <location>
        <begin position="197"/>
        <end position="208"/>
    </location>
</feature>
<feature type="lipid moiety-binding region" description="N-palmitoyl cysteine" evidence="1">
    <location>
        <position position="28"/>
    </location>
</feature>
<feature type="lipid moiety-binding region" description="S-diacylglycerol cysteine" evidence="1">
    <location>
        <position position="28"/>
    </location>
</feature>
<accession>Q9ZMK2</accession>
<reference key="1">
    <citation type="journal article" date="1999" name="Nature">
        <title>Genomic sequence comparison of two unrelated isolates of the human gastric pathogen Helicobacter pylori.</title>
        <authorList>
            <person name="Alm R.A."/>
            <person name="Ling L.-S.L."/>
            <person name="Moir D.T."/>
            <person name="King B.L."/>
            <person name="Brown E.D."/>
            <person name="Doig P.C."/>
            <person name="Smith D.R."/>
            <person name="Noonan B."/>
            <person name="Guild B.C."/>
            <person name="deJonge B.L."/>
            <person name="Carmel G."/>
            <person name="Tummino P.J."/>
            <person name="Caruso A."/>
            <person name="Uria-Nickelsen M."/>
            <person name="Mills D.M."/>
            <person name="Ives C."/>
            <person name="Gibson R."/>
            <person name="Merberg D."/>
            <person name="Mills S.D."/>
            <person name="Jiang Q."/>
            <person name="Taylor D.E."/>
            <person name="Vovis G.F."/>
            <person name="Trust T.J."/>
        </authorList>
    </citation>
    <scope>NUCLEOTIDE SEQUENCE [LARGE SCALE GENOMIC DNA]</scope>
    <source>
        <strain>J99 / ATCC 700824</strain>
    </source>
</reference>
<gene>
    <name type="ordered locus">jhp_0217</name>
</gene>
<organism>
    <name type="scientific">Helicobacter pylori (strain J99 / ATCC 700824)</name>
    <name type="common">Campylobacter pylori J99</name>
    <dbReference type="NCBI Taxonomy" id="85963"/>
    <lineage>
        <taxon>Bacteria</taxon>
        <taxon>Pseudomonadati</taxon>
        <taxon>Campylobacterota</taxon>
        <taxon>Epsilonproteobacteria</taxon>
        <taxon>Campylobacterales</taxon>
        <taxon>Helicobacteraceae</taxon>
        <taxon>Helicobacter</taxon>
    </lineage>
</organism>